<keyword id="KW-0067">ATP-binding</keyword>
<keyword id="KW-0963">Cytoplasm</keyword>
<keyword id="KW-0378">Hydrolase</keyword>
<keyword id="KW-0472">Membrane</keyword>
<keyword id="KW-0547">Nucleotide-binding</keyword>
<keyword id="KW-0576">Peroxisome</keyword>
<keyword id="KW-0962">Peroxisome biogenesis</keyword>
<keyword id="KW-1185">Reference proteome</keyword>
<feature type="chain" id="PRO_0000084612" description="Peroxisomal ATPase PEX6">
    <location>
        <begin position="1"/>
        <end position="1198"/>
    </location>
</feature>
<feature type="binding site" evidence="2">
    <location>
        <begin position="879"/>
        <end position="886"/>
    </location>
    <ligand>
        <name>ATP</name>
        <dbReference type="ChEBI" id="CHEBI:30616"/>
    </ligand>
</feature>
<name>PEX6_DEBHA</name>
<evidence type="ECO:0000250" key="1">
    <source>
        <dbReference type="UniProtKB" id="P33760"/>
    </source>
</evidence>
<evidence type="ECO:0000255" key="2"/>
<evidence type="ECO:0000305" key="3"/>
<comment type="function">
    <text evidence="1">Component of the PEX1-PEX6 AAA ATPase complex, a protein dislocase complex that mediates the ATP-dependent extraction of the PEX5 receptor from peroxisomal membranes, an essential step for PEX5 recycling. Specifically recognizes PEX5 monoubiquitinated at 'Cys-6', and pulls it out of the peroxisome lumen through the PEX2-PEX10-PEX12 retrotranslocation channel. Extraction by the PEX1-PEX6 AAA ATPase complex is accompanied by unfolding of the TPR repeats and release of bound cargo from PEX5.</text>
</comment>
<comment type="catalytic activity">
    <reaction evidence="1">
        <text>ATP + H2O = ADP + phosphate + H(+)</text>
        <dbReference type="Rhea" id="RHEA:13065"/>
        <dbReference type="ChEBI" id="CHEBI:15377"/>
        <dbReference type="ChEBI" id="CHEBI:15378"/>
        <dbReference type="ChEBI" id="CHEBI:30616"/>
        <dbReference type="ChEBI" id="CHEBI:43474"/>
        <dbReference type="ChEBI" id="CHEBI:456216"/>
    </reaction>
    <physiologicalReaction direction="left-to-right" evidence="1">
        <dbReference type="Rhea" id="RHEA:13066"/>
    </physiologicalReaction>
</comment>
<comment type="subunit">
    <text evidence="1">Interacts with PEX1; forming the PEX1-PEX6 AAA ATPase complex, which is composed of a heterohexamer formed by a trimer of PEX1-PEX6 dimers.</text>
</comment>
<comment type="subcellular location">
    <subcellularLocation>
        <location evidence="1">Cytoplasm</location>
        <location evidence="1">Cytosol</location>
    </subcellularLocation>
    <subcellularLocation>
        <location evidence="1">Peroxisome membrane</location>
        <topology evidence="1">Peripheral membrane protein</topology>
        <orientation evidence="1">Cytoplasmic side</orientation>
    </subcellularLocation>
</comment>
<comment type="similarity">
    <text evidence="3">Belongs to the AAA ATPase family.</text>
</comment>
<dbReference type="EC" id="3.6.4.-" evidence="1"/>
<dbReference type="EMBL" id="CR382136">
    <property type="protein sequence ID" value="CAG87108.2"/>
    <property type="molecule type" value="Genomic_DNA"/>
</dbReference>
<dbReference type="RefSeq" id="XP_458947.2">
    <property type="nucleotide sequence ID" value="XM_458947.1"/>
</dbReference>
<dbReference type="SMR" id="Q6BS73"/>
<dbReference type="FunCoup" id="Q6BS73">
    <property type="interactions" value="306"/>
</dbReference>
<dbReference type="STRING" id="284592.Q6BS73"/>
<dbReference type="GeneID" id="2901459"/>
<dbReference type="KEGG" id="dha:DEHA2D11088g"/>
<dbReference type="VEuPathDB" id="FungiDB:DEHA2D11088g"/>
<dbReference type="eggNOG" id="KOG0736">
    <property type="taxonomic scope" value="Eukaryota"/>
</dbReference>
<dbReference type="HOGENOM" id="CLU_000688_0_1_1"/>
<dbReference type="InParanoid" id="Q6BS73"/>
<dbReference type="OMA" id="DSMLNAM"/>
<dbReference type="OrthoDB" id="5553750at2759"/>
<dbReference type="Proteomes" id="UP000000599">
    <property type="component" value="Chromosome D"/>
</dbReference>
<dbReference type="GO" id="GO:1904949">
    <property type="term" value="C:ATPase complex"/>
    <property type="evidence" value="ECO:0007669"/>
    <property type="project" value="EnsemblFungi"/>
</dbReference>
<dbReference type="GO" id="GO:0005829">
    <property type="term" value="C:cytosol"/>
    <property type="evidence" value="ECO:0007669"/>
    <property type="project" value="UniProtKB-SubCell"/>
</dbReference>
<dbReference type="GO" id="GO:0005778">
    <property type="term" value="C:peroxisomal membrane"/>
    <property type="evidence" value="ECO:0007669"/>
    <property type="project" value="UniProtKB-SubCell"/>
</dbReference>
<dbReference type="GO" id="GO:1990351">
    <property type="term" value="C:transporter complex"/>
    <property type="evidence" value="ECO:0007669"/>
    <property type="project" value="EnsemblFungi"/>
</dbReference>
<dbReference type="GO" id="GO:0005524">
    <property type="term" value="F:ATP binding"/>
    <property type="evidence" value="ECO:0007669"/>
    <property type="project" value="UniProtKB-KW"/>
</dbReference>
<dbReference type="GO" id="GO:0016887">
    <property type="term" value="F:ATP hydrolysis activity"/>
    <property type="evidence" value="ECO:0007669"/>
    <property type="project" value="EnsemblFungi"/>
</dbReference>
<dbReference type="GO" id="GO:0140318">
    <property type="term" value="F:protein transporter activity"/>
    <property type="evidence" value="ECO:0007669"/>
    <property type="project" value="EnsemblFungi"/>
</dbReference>
<dbReference type="GO" id="GO:0016562">
    <property type="term" value="P:protein import into peroxisome matrix, receptor recycling"/>
    <property type="evidence" value="ECO:0007669"/>
    <property type="project" value="EnsemblFungi"/>
</dbReference>
<dbReference type="GO" id="GO:0043335">
    <property type="term" value="P:protein unfolding"/>
    <property type="evidence" value="ECO:0007669"/>
    <property type="project" value="EnsemblFungi"/>
</dbReference>
<dbReference type="CDD" id="cd19527">
    <property type="entry name" value="RecA-like_PEX6_r2"/>
    <property type="match status" value="1"/>
</dbReference>
<dbReference type="FunFam" id="3.40.50.300:FF:000109">
    <property type="entry name" value="Peroxisomal biogenesis factor 6"/>
    <property type="match status" value="1"/>
</dbReference>
<dbReference type="FunFam" id="1.10.8.60:FF:000039">
    <property type="entry name" value="peroxisome biogenesis factor 6"/>
    <property type="match status" value="1"/>
</dbReference>
<dbReference type="Gene3D" id="1.10.8.60">
    <property type="match status" value="1"/>
</dbReference>
<dbReference type="Gene3D" id="3.40.50.300">
    <property type="entry name" value="P-loop containing nucleotide triphosphate hydrolases"/>
    <property type="match status" value="2"/>
</dbReference>
<dbReference type="InterPro" id="IPR003593">
    <property type="entry name" value="AAA+_ATPase"/>
</dbReference>
<dbReference type="InterPro" id="IPR050168">
    <property type="entry name" value="AAA_ATPase_domain"/>
</dbReference>
<dbReference type="InterPro" id="IPR003959">
    <property type="entry name" value="ATPase_AAA_core"/>
</dbReference>
<dbReference type="InterPro" id="IPR003960">
    <property type="entry name" value="ATPase_AAA_CS"/>
</dbReference>
<dbReference type="InterPro" id="IPR027417">
    <property type="entry name" value="P-loop_NTPase"/>
</dbReference>
<dbReference type="InterPro" id="IPR056995">
    <property type="entry name" value="PEX6_4th_dom"/>
</dbReference>
<dbReference type="InterPro" id="IPR047533">
    <property type="entry name" value="RecA-like_PEX6_r2"/>
</dbReference>
<dbReference type="PANTHER" id="PTHR23077">
    <property type="entry name" value="AAA-FAMILY ATPASE"/>
    <property type="match status" value="1"/>
</dbReference>
<dbReference type="PANTHER" id="PTHR23077:SF9">
    <property type="entry name" value="PEROXISOMAL ATPASE PEX6"/>
    <property type="match status" value="1"/>
</dbReference>
<dbReference type="Pfam" id="PF00004">
    <property type="entry name" value="AAA"/>
    <property type="match status" value="2"/>
</dbReference>
<dbReference type="Pfam" id="PF23315">
    <property type="entry name" value="PEX6_4th"/>
    <property type="match status" value="1"/>
</dbReference>
<dbReference type="SMART" id="SM00382">
    <property type="entry name" value="AAA"/>
    <property type="match status" value="2"/>
</dbReference>
<dbReference type="SUPFAM" id="SSF52540">
    <property type="entry name" value="P-loop containing nucleoside triphosphate hydrolases"/>
    <property type="match status" value="2"/>
</dbReference>
<dbReference type="PROSITE" id="PS00674">
    <property type="entry name" value="AAA"/>
    <property type="match status" value="1"/>
</dbReference>
<reference key="1">
    <citation type="journal article" date="2004" name="Nature">
        <title>Genome evolution in yeasts.</title>
        <authorList>
            <person name="Dujon B."/>
            <person name="Sherman D."/>
            <person name="Fischer G."/>
            <person name="Durrens P."/>
            <person name="Casaregola S."/>
            <person name="Lafontaine I."/>
            <person name="de Montigny J."/>
            <person name="Marck C."/>
            <person name="Neuveglise C."/>
            <person name="Talla E."/>
            <person name="Goffard N."/>
            <person name="Frangeul L."/>
            <person name="Aigle M."/>
            <person name="Anthouard V."/>
            <person name="Babour A."/>
            <person name="Barbe V."/>
            <person name="Barnay S."/>
            <person name="Blanchin S."/>
            <person name="Beckerich J.-M."/>
            <person name="Beyne E."/>
            <person name="Bleykasten C."/>
            <person name="Boisrame A."/>
            <person name="Boyer J."/>
            <person name="Cattolico L."/>
            <person name="Confanioleri F."/>
            <person name="de Daruvar A."/>
            <person name="Despons L."/>
            <person name="Fabre E."/>
            <person name="Fairhead C."/>
            <person name="Ferry-Dumazet H."/>
            <person name="Groppi A."/>
            <person name="Hantraye F."/>
            <person name="Hennequin C."/>
            <person name="Jauniaux N."/>
            <person name="Joyet P."/>
            <person name="Kachouri R."/>
            <person name="Kerrest A."/>
            <person name="Koszul R."/>
            <person name="Lemaire M."/>
            <person name="Lesur I."/>
            <person name="Ma L."/>
            <person name="Muller H."/>
            <person name="Nicaud J.-M."/>
            <person name="Nikolski M."/>
            <person name="Oztas S."/>
            <person name="Ozier-Kalogeropoulos O."/>
            <person name="Pellenz S."/>
            <person name="Potier S."/>
            <person name="Richard G.-F."/>
            <person name="Straub M.-L."/>
            <person name="Suleau A."/>
            <person name="Swennen D."/>
            <person name="Tekaia F."/>
            <person name="Wesolowski-Louvel M."/>
            <person name="Westhof E."/>
            <person name="Wirth B."/>
            <person name="Zeniou-Meyer M."/>
            <person name="Zivanovic Y."/>
            <person name="Bolotin-Fukuhara M."/>
            <person name="Thierry A."/>
            <person name="Bouchier C."/>
            <person name="Caudron B."/>
            <person name="Scarpelli C."/>
            <person name="Gaillardin C."/>
            <person name="Weissenbach J."/>
            <person name="Wincker P."/>
            <person name="Souciet J.-L."/>
        </authorList>
    </citation>
    <scope>NUCLEOTIDE SEQUENCE [LARGE SCALE GENOMIC DNA]</scope>
    <source>
        <strain>ATCC 36239 / CBS 767 / BCRC 21394 / JCM 1990 / NBRC 0083 / IGC 2968</strain>
    </source>
</reference>
<gene>
    <name type="primary">PEX6</name>
    <name type="ordered locus">DEHA2D11088g</name>
</gene>
<proteinExistence type="inferred from homology"/>
<accession>Q6BS73</accession>
<organism>
    <name type="scientific">Debaryomyces hansenii (strain ATCC 36239 / CBS 767 / BCRC 21394 / JCM 1990 / NBRC 0083 / IGC 2968)</name>
    <name type="common">Yeast</name>
    <name type="synonym">Torulaspora hansenii</name>
    <dbReference type="NCBI Taxonomy" id="284592"/>
    <lineage>
        <taxon>Eukaryota</taxon>
        <taxon>Fungi</taxon>
        <taxon>Dikarya</taxon>
        <taxon>Ascomycota</taxon>
        <taxon>Saccharomycotina</taxon>
        <taxon>Pichiomycetes</taxon>
        <taxon>Debaryomycetaceae</taxon>
        <taxon>Debaryomyces</taxon>
    </lineage>
</organism>
<sequence>MPSAVLEKPLNEINKSISTTANVHFINDPTLSEQFDTIQLSFELFIRVFPDTGSDDSNNMSENKFVLIKLLGAPDYFKEFKIYRVTSIDHSAPTSNSVIFINHSNLLKFDNQLTLNSCVIQSIDYSCIPTIESLFVSVPPNIYSTLHDKPSTSIREQFINTFLLNSGSVVGTGDIIRSINGEVKLSEPVSQGIVSNNTNIVLIKTVENNNDDIDYNEKEIEDQEVSEDDLDSEIHLDLSTYLSSSLQIDSPAVHSVKLKVEPLPAKMSVDMLPPIWLKEDTELFVFANTAELPKLGFPVFNGDSVKLNYNNDKMIVKLFTFIEPNKSFRRRTLYLSPILLANLKLSSNSEVTLEPIRQRDHPFTNFFPVAKSVTISRVSSHITMDKTYQQHFFSELKTTFHKNLKCVKRGDFVPVVIDTVLAKTMFDTNNLIQQQQQLQPGEEENAPDMGVIPTGDPDEVAWFKIVDISGESHENETNQFIIDPTKTRLISSGVEFIKLPPNDFTHWYQYLKLPPVFNFNKAIDSNPTCFKYVSEFKKIVTTSLNSRSKINLKTTILLNSMTRGLGKTTMVRSVSTELGLNLIELDCFDLINPGAELKTIGLLTGKIDKLIGAQENSTDTDSSYHVIYLKHIENLCAQSNQNEQGANITTSLSLKVIQTLNEYLNDYSNLMIIMSCNDLDKLNENLRSLIKFQIDFSVPDEKERLEVFKFLIENETHKLINSNNPEPFEDREEFEDQFDVSTVSFSRRHDISFSSLALQSAGLTPRDLMSIIKKAKRLAISRLMGLAKDSNISLEKLIKVGNGGLITWIPEDFNKAINDARNQFSDSIGAPRIPDVKWEDIGGLDLVKDEIMDTIDMPLKHPELFSNGLKKRSGILFYGPPGTGKTLLAKAIATNFSLNFFSVKGPELLNMYIGESEANVRRVFQKARDAKPCVIFFDELDSVAPKRGNQGDSGGVMDRIVSQLLAELDGMSGGAEGGGDGVFVVGATNRPDLLDEALLRPGRFDKMLYLGISDTDEKQSKILEALTRKFKLADNVDLYEIAKRCSFTFTGADFYALCSDSMLNAMTRTANEVDAKIKKLNEELTSQGKEEISTRWWFDNAATPEDIDVLVQMEDFKKAQSELAPSVSAEELEHYLRVRENFEGGKEKAMANGTTSAANGTSQGIPHEFMQKVEELIGDGIDGIVDENGNHIHASSDH</sequence>
<protein>
    <recommendedName>
        <fullName evidence="3">Peroxisomal ATPase PEX6</fullName>
        <ecNumber evidence="1">3.6.4.-</ecNumber>
    </recommendedName>
    <alternativeName>
        <fullName>Peroxin-6</fullName>
    </alternativeName>
    <alternativeName>
        <fullName>Peroxisomal biogenesis factor 6</fullName>
    </alternativeName>
</protein>